<comment type="function">
    <text evidence="1">This b-type cytochrome is tightly associated with the reaction center of photosystem II (PSII). PSII is a light-driven water:plastoquinone oxidoreductase that uses light energy to abstract electrons from H(2)O, generating O(2) and a proton gradient subsequently used for ATP formation. It consists of a core antenna complex that captures photons, and an electron transfer chain that converts photonic excitation into a charge separation.</text>
</comment>
<comment type="cofactor">
    <cofactor evidence="1">
        <name>heme b</name>
        <dbReference type="ChEBI" id="CHEBI:60344"/>
    </cofactor>
    <text evidence="1">With its partner (PsbE) binds heme. PSII binds additional chlorophylls, carotenoids and specific lipids.</text>
</comment>
<comment type="subunit">
    <text evidence="1">Heterodimer of an alpha subunit and a beta subunit. PSII is composed of 1 copy each of membrane proteins PsbA, PsbB, PsbC, PsbD, PsbE, PsbF, PsbH, PsbI, PsbJ, PsbK, PsbL, PsbM, PsbT, PsbX, PsbY, PsbZ, Psb30/Ycf12, at least 3 peripheral proteins of the oxygen-evolving complex and a large number of cofactors. It forms dimeric complexes.</text>
</comment>
<comment type="subcellular location">
    <subcellularLocation>
        <location evidence="1">Plastid</location>
        <location evidence="1">Chloroplast thylakoid membrane</location>
        <topology evidence="1">Single-pass membrane protein</topology>
    </subcellularLocation>
</comment>
<comment type="similarity">
    <text evidence="1">Belongs to the PsbE/PsbF family.</text>
</comment>
<comment type="sequence caution" evidence="2">
    <conflict type="erroneous initiation">
        <sequence resource="EMBL-CDS" id="AAS46131"/>
    </conflict>
    <text>Extended N-terminus.</text>
</comment>
<keyword id="KW-0150">Chloroplast</keyword>
<keyword id="KW-0249">Electron transport</keyword>
<keyword id="KW-0349">Heme</keyword>
<keyword id="KW-0408">Iron</keyword>
<keyword id="KW-0472">Membrane</keyword>
<keyword id="KW-0479">Metal-binding</keyword>
<keyword id="KW-0602">Photosynthesis</keyword>
<keyword id="KW-0604">Photosystem II</keyword>
<keyword id="KW-0934">Plastid</keyword>
<keyword id="KW-1185">Reference proteome</keyword>
<keyword id="KW-0793">Thylakoid</keyword>
<keyword id="KW-0812">Transmembrane</keyword>
<keyword id="KW-1133">Transmembrane helix</keyword>
<keyword id="KW-0813">Transport</keyword>
<protein>
    <recommendedName>
        <fullName evidence="1">Cytochrome b559 subunit beta</fullName>
    </recommendedName>
    <alternativeName>
        <fullName evidence="1">PSII reaction center subunit VI</fullName>
    </alternativeName>
</protein>
<gene>
    <name evidence="1" type="primary">psbF</name>
    <name type="ordered locus">LOC_Osp1g00510</name>
    <name type="ORF">Nip078</name>
</gene>
<dbReference type="EMBL" id="X15057">
    <property type="protein sequence ID" value="CAA33156.1"/>
    <property type="molecule type" value="Genomic_DNA"/>
</dbReference>
<dbReference type="EMBL" id="X15901">
    <property type="protein sequence ID" value="CAA33964.1"/>
    <property type="molecule type" value="Genomic_DNA"/>
</dbReference>
<dbReference type="EMBL" id="AY522330">
    <property type="protein sequence ID" value="AAS46131.1"/>
    <property type="status" value="ALT_INIT"/>
    <property type="molecule type" value="Genomic_DNA"/>
</dbReference>
<dbReference type="PIR" id="JQ0242">
    <property type="entry name" value="F2RZ4"/>
</dbReference>
<dbReference type="RefSeq" id="NP_039402.1">
    <property type="nucleotide sequence ID" value="NC_001320.1"/>
</dbReference>
<dbReference type="RefSeq" id="YP_009305320.1">
    <property type="nucleotide sequence ID" value="NC_031333.1"/>
</dbReference>
<dbReference type="SMR" id="P0C401"/>
<dbReference type="FunCoup" id="P0C401">
    <property type="interactions" value="95"/>
</dbReference>
<dbReference type="STRING" id="39947.P0C401"/>
<dbReference type="PaxDb" id="39947-P0C401"/>
<dbReference type="EnsemblPlants" id="Os03t0659266-00">
    <property type="protein sequence ID" value="Os03t0659266-00"/>
    <property type="gene ID" value="Os03g0659266"/>
</dbReference>
<dbReference type="EnsemblPlants" id="transcript-psbF">
    <property type="protein sequence ID" value="cds-CAA33964.1"/>
    <property type="gene ID" value="gene-psbF"/>
</dbReference>
<dbReference type="GeneID" id="29141386"/>
<dbReference type="GeneID" id="3131414"/>
<dbReference type="Gramene" id="Os03t0659266-00">
    <property type="protein sequence ID" value="Os03t0659266-00"/>
    <property type="gene ID" value="Os03g0659266"/>
</dbReference>
<dbReference type="Gramene" id="transcript-psbF">
    <property type="protein sequence ID" value="cds-CAA33964.1"/>
    <property type="gene ID" value="gene-psbF"/>
</dbReference>
<dbReference type="KEGG" id="dosa:psbF"/>
<dbReference type="KEGG" id="osa:3131414"/>
<dbReference type="eggNOG" id="ENOG502SEUE">
    <property type="taxonomic scope" value="Eukaryota"/>
</dbReference>
<dbReference type="HOGENOM" id="CLU_211753_1_0_1"/>
<dbReference type="InParanoid" id="P0C401"/>
<dbReference type="OrthoDB" id="77at2759"/>
<dbReference type="Proteomes" id="UP000059680">
    <property type="component" value="Chloroplast"/>
</dbReference>
<dbReference type="GO" id="GO:0009535">
    <property type="term" value="C:chloroplast thylakoid membrane"/>
    <property type="evidence" value="ECO:0007669"/>
    <property type="project" value="UniProtKB-SubCell"/>
</dbReference>
<dbReference type="GO" id="GO:0009539">
    <property type="term" value="C:photosystem II reaction center"/>
    <property type="evidence" value="ECO:0007669"/>
    <property type="project" value="InterPro"/>
</dbReference>
<dbReference type="GO" id="GO:0009536">
    <property type="term" value="C:plastid"/>
    <property type="evidence" value="ECO:0000305"/>
    <property type="project" value="Gramene"/>
</dbReference>
<dbReference type="GO" id="GO:0009055">
    <property type="term" value="F:electron transfer activity"/>
    <property type="evidence" value="ECO:0007669"/>
    <property type="project" value="UniProtKB-UniRule"/>
</dbReference>
<dbReference type="GO" id="GO:0020037">
    <property type="term" value="F:heme binding"/>
    <property type="evidence" value="ECO:0007669"/>
    <property type="project" value="InterPro"/>
</dbReference>
<dbReference type="GO" id="GO:0005506">
    <property type="term" value="F:iron ion binding"/>
    <property type="evidence" value="ECO:0007669"/>
    <property type="project" value="UniProtKB-UniRule"/>
</dbReference>
<dbReference type="GO" id="GO:0009767">
    <property type="term" value="P:photosynthetic electron transport chain"/>
    <property type="evidence" value="ECO:0007669"/>
    <property type="project" value="InterPro"/>
</dbReference>
<dbReference type="HAMAP" id="MF_00643">
    <property type="entry name" value="PSII_PsbF"/>
    <property type="match status" value="1"/>
</dbReference>
<dbReference type="InterPro" id="IPR006241">
    <property type="entry name" value="PSII_cyt_b559_bsu"/>
</dbReference>
<dbReference type="InterPro" id="IPR006216">
    <property type="entry name" value="PSII_cyt_b559_CS"/>
</dbReference>
<dbReference type="InterPro" id="IPR013081">
    <property type="entry name" value="PSII_cyt_b559_N"/>
</dbReference>
<dbReference type="NCBIfam" id="TIGR01333">
    <property type="entry name" value="cyt_b559_beta"/>
    <property type="match status" value="1"/>
</dbReference>
<dbReference type="Pfam" id="PF00283">
    <property type="entry name" value="Cytochrom_B559"/>
    <property type="match status" value="1"/>
</dbReference>
<dbReference type="PIRSF" id="PIRSF000037">
    <property type="entry name" value="PsbF"/>
    <property type="match status" value="1"/>
</dbReference>
<dbReference type="SUPFAM" id="SSF161045">
    <property type="entry name" value="Cytochrome b559 subunits"/>
    <property type="match status" value="1"/>
</dbReference>
<dbReference type="PROSITE" id="PS00537">
    <property type="entry name" value="CYTOCHROME_B559"/>
    <property type="match status" value="1"/>
</dbReference>
<name>PSBF_ORYSJ</name>
<organism>
    <name type="scientific">Oryza sativa subsp. japonica</name>
    <name type="common">Rice</name>
    <dbReference type="NCBI Taxonomy" id="39947"/>
    <lineage>
        <taxon>Eukaryota</taxon>
        <taxon>Viridiplantae</taxon>
        <taxon>Streptophyta</taxon>
        <taxon>Embryophyta</taxon>
        <taxon>Tracheophyta</taxon>
        <taxon>Spermatophyta</taxon>
        <taxon>Magnoliopsida</taxon>
        <taxon>Liliopsida</taxon>
        <taxon>Poales</taxon>
        <taxon>Poaceae</taxon>
        <taxon>BOP clade</taxon>
        <taxon>Oryzoideae</taxon>
        <taxon>Oryzeae</taxon>
        <taxon>Oryzinae</taxon>
        <taxon>Oryza</taxon>
        <taxon>Oryza sativa</taxon>
    </lineage>
</organism>
<proteinExistence type="inferred from homology"/>
<feature type="chain" id="PRO_0000289557" description="Cytochrome b559 subunit beta">
    <location>
        <begin position="1"/>
        <end position="39"/>
    </location>
</feature>
<feature type="transmembrane region" description="Helical" evidence="1">
    <location>
        <begin position="14"/>
        <end position="30"/>
    </location>
</feature>
<feature type="binding site" description="axial binding residue" evidence="1">
    <location>
        <position position="18"/>
    </location>
    <ligand>
        <name>heme</name>
        <dbReference type="ChEBI" id="CHEBI:30413"/>
        <note>ligand shared with alpha subunit</note>
    </ligand>
    <ligandPart>
        <name>Fe</name>
        <dbReference type="ChEBI" id="CHEBI:18248"/>
    </ligandPart>
</feature>
<geneLocation type="chloroplast"/>
<reference key="1">
    <citation type="journal article" date="1988" name="Nucleic Acids Res.">
        <title>Sequence of the chloroplast psbF gene encoding the photosystem II 10 kDa phosphoprotein from Oryza sativa L.</title>
        <authorList>
            <person name="Cote J.-C."/>
            <person name="Wu R."/>
        </authorList>
    </citation>
    <scope>NUCLEOTIDE SEQUENCE [GENOMIC DNA]</scope>
    <source>
        <strain>cv. Labelle</strain>
        <tissue>Leaf</tissue>
    </source>
</reference>
<reference key="2">
    <citation type="journal article" date="1989" name="Mol. Gen. Genet.">
        <title>The complete sequence of the rice (Oryza sativa) chloroplast genome: intermolecular recombination between distinct tRNA genes accounts for a major plastid DNA inversion during the evolution of the cereals.</title>
        <authorList>
            <person name="Hiratsuka J."/>
            <person name="Shimada H."/>
            <person name="Whittier R."/>
            <person name="Ishibashi T."/>
            <person name="Sakamoto M."/>
            <person name="Mori M."/>
            <person name="Kondo C."/>
            <person name="Honji Y."/>
            <person name="Sun C.-R."/>
            <person name="Meng B.-Y."/>
            <person name="Li Y.-Q."/>
            <person name="Kanno A."/>
            <person name="Nishizawa Y."/>
            <person name="Hirai A."/>
            <person name="Shinozaki K."/>
            <person name="Sugiura M."/>
        </authorList>
    </citation>
    <scope>NUCLEOTIDE SEQUENCE [LARGE SCALE GENOMIC DNA]</scope>
    <source>
        <strain>cv. Nipponbare</strain>
    </source>
</reference>
<reference key="3">
    <citation type="journal article" date="2004" name="Plant Physiol.">
        <title>A comparison of rice chloroplast genomes.</title>
        <authorList>
            <person name="Tang J."/>
            <person name="Xia H."/>
            <person name="Cao M."/>
            <person name="Zhang X."/>
            <person name="Zeng W."/>
            <person name="Hu S."/>
            <person name="Tong W."/>
            <person name="Wang J."/>
            <person name="Wang J."/>
            <person name="Yu J."/>
            <person name="Yang H."/>
            <person name="Zhu L."/>
        </authorList>
    </citation>
    <scope>NUCLEOTIDE SEQUENCE [LARGE SCALE GENOMIC DNA]</scope>
    <source>
        <strain>cv. Nipponbare</strain>
    </source>
</reference>
<evidence type="ECO:0000255" key="1">
    <source>
        <dbReference type="HAMAP-Rule" id="MF_00643"/>
    </source>
</evidence>
<evidence type="ECO:0000305" key="2"/>
<sequence length="39" mass="4484">MTIDRTYPIFTVRWLAVHGLAVPTVFFLGSISAMQFIQR</sequence>
<accession>P0C401</accession>
<accession>P12088</accession>
<accession>P69522</accession>
<accession>Q6QY00</accession>
<accession>Q6QY64</accession>